<dbReference type="EMBL" id="AAFI02000005">
    <property type="protein sequence ID" value="EAL72498.1"/>
    <property type="molecule type" value="Genomic_DNA"/>
</dbReference>
<dbReference type="RefSeq" id="XP_646686.1">
    <property type="nucleotide sequence ID" value="XM_641594.1"/>
</dbReference>
<dbReference type="SMR" id="Q55BZ5"/>
<dbReference type="FunCoup" id="Q55BZ5">
    <property type="interactions" value="1"/>
</dbReference>
<dbReference type="GlyCosmos" id="Q55BZ5">
    <property type="glycosylation" value="4 sites, No reported glycans"/>
</dbReference>
<dbReference type="GlyGen" id="Q55BZ5">
    <property type="glycosylation" value="5 sites"/>
</dbReference>
<dbReference type="PaxDb" id="44689-DDB0232076"/>
<dbReference type="EnsemblProtists" id="EAL72498">
    <property type="protein sequence ID" value="EAL72498"/>
    <property type="gene ID" value="DDB_G0270296"/>
</dbReference>
<dbReference type="GeneID" id="8617661"/>
<dbReference type="KEGG" id="ddi:DDB_G0270296"/>
<dbReference type="dictyBase" id="DDB_G0270296">
    <property type="gene designation" value="dcd1A"/>
</dbReference>
<dbReference type="VEuPathDB" id="AmoebaDB:DDB_G0270296"/>
<dbReference type="eggNOG" id="ENOG502RA4J">
    <property type="taxonomic scope" value="Eukaryota"/>
</dbReference>
<dbReference type="HOGENOM" id="CLU_616695_0_0_1"/>
<dbReference type="InParanoid" id="Q55BZ5"/>
<dbReference type="OMA" id="GICEKYW"/>
<dbReference type="PhylomeDB" id="Q55BZ5"/>
<dbReference type="PRO" id="PR:Q55BZ5"/>
<dbReference type="Proteomes" id="UP000002195">
    <property type="component" value="Chromosome 1"/>
</dbReference>
<dbReference type="GO" id="GO:0005576">
    <property type="term" value="C:extracellular region"/>
    <property type="evidence" value="ECO:0007669"/>
    <property type="project" value="UniProtKB-SubCell"/>
</dbReference>
<dbReference type="Gene3D" id="3.60.60.10">
    <property type="entry name" value="Penicillin V Acylase, Chain A"/>
    <property type="match status" value="1"/>
</dbReference>
<dbReference type="InterPro" id="IPR047794">
    <property type="entry name" value="C45_proenzyme-like"/>
</dbReference>
<dbReference type="InterPro" id="IPR047803">
    <property type="entry name" value="DCD1A/B-like"/>
</dbReference>
<dbReference type="NCBIfam" id="NF040521">
    <property type="entry name" value="C45_proenzyme"/>
    <property type="match status" value="1"/>
</dbReference>
<dbReference type="PANTHER" id="PTHR35190:SF3">
    <property type="entry name" value="PROTEIN DCD1A"/>
    <property type="match status" value="1"/>
</dbReference>
<dbReference type="PANTHER" id="PTHR35190">
    <property type="entry name" value="PROTEIN DCD1B"/>
    <property type="match status" value="1"/>
</dbReference>
<protein>
    <recommendedName>
        <fullName>Protein dcd1A</fullName>
    </recommendedName>
    <alternativeName>
        <fullName>Acid ceramidase-like protein A</fullName>
    </alternativeName>
</protein>
<evidence type="ECO:0000255" key="1"/>
<evidence type="ECO:0000269" key="2">
    <source>
    </source>
</evidence>
<evidence type="ECO:0000305" key="3"/>
<proteinExistence type="evidence at transcript level"/>
<comment type="subcellular location">
    <subcellularLocation>
        <location evidence="3">Secreted</location>
    </subcellularLocation>
</comment>
<comment type="induction">
    <text evidence="2">Down-regulated by Pseudomonas aeruginosa, PAO1 strain and up-regulated by Pseudomonas aeruginosa, PA14 strain infection.</text>
</comment>
<gene>
    <name type="primary">dcd1A</name>
    <name type="ORF">DDB_G0270296</name>
</gene>
<sequence>MKIFNKLIFLIIQCILIISVTNAQVDCGGTDNPYPIYNELPVLINQTTYGKLYKIGPPDNLINIIELYGTPYQRGLAQGQLLKSEINDIFDNFFGYITVMVNELVTKYADYLPKFLVDALEEGGVGLALDITADLTKKYTPKSFFEEMQGIADGSGIEYKTILRLHMFPELIKAACSMVGAYNSATLNKGLLQLRALDFGFDPMNPLRLHPTVMIYHPESVSAGGDGGHEFATLSWAGFLGTLTGYSQHVGICEKYWFGYNGTSSREGIPFHFLLREIIQFDESIDEALNRIINADRTCSVFMGLGSNQTNTFKAVEYSYEYVRVFDDQTPFPSYVPTPSAHPVIQDVVYIDKFVQPSNHQCLASVLQKSLGSIDVTSLINAAAQLQTGDIHIGIYDYQQNQMYVSVGTQSGPYPPPSNFTIVPAYARQFIQIDLNSFFNQ</sequence>
<accession>Q55BZ5</accession>
<organism>
    <name type="scientific">Dictyostelium discoideum</name>
    <name type="common">Social amoeba</name>
    <dbReference type="NCBI Taxonomy" id="44689"/>
    <lineage>
        <taxon>Eukaryota</taxon>
        <taxon>Amoebozoa</taxon>
        <taxon>Evosea</taxon>
        <taxon>Eumycetozoa</taxon>
        <taxon>Dictyostelia</taxon>
        <taxon>Dictyosteliales</taxon>
        <taxon>Dictyosteliaceae</taxon>
        <taxon>Dictyostelium</taxon>
    </lineage>
</organism>
<keyword id="KW-0325">Glycoprotein</keyword>
<keyword id="KW-1185">Reference proteome</keyword>
<keyword id="KW-0964">Secreted</keyword>
<keyword id="KW-0732">Signal</keyword>
<feature type="signal peptide" evidence="1">
    <location>
        <begin position="1"/>
        <end position="23"/>
    </location>
</feature>
<feature type="chain" id="PRO_0000384455" description="Protein dcd1A">
    <location>
        <begin position="24"/>
        <end position="441"/>
    </location>
</feature>
<feature type="glycosylation site" description="N-linked (GlcNAc...) asparagine" evidence="1">
    <location>
        <position position="45"/>
    </location>
</feature>
<feature type="glycosylation site" description="N-linked (GlcNAc...) asparagine" evidence="1">
    <location>
        <position position="261"/>
    </location>
</feature>
<feature type="glycosylation site" description="N-linked (GlcNAc...) asparagine" evidence="1">
    <location>
        <position position="308"/>
    </location>
</feature>
<feature type="glycosylation site" description="N-linked (GlcNAc...) asparagine" evidence="1">
    <location>
        <position position="419"/>
    </location>
</feature>
<reference key="1">
    <citation type="journal article" date="2005" name="Nature">
        <title>The genome of the social amoeba Dictyostelium discoideum.</title>
        <authorList>
            <person name="Eichinger L."/>
            <person name="Pachebat J.A."/>
            <person name="Gloeckner G."/>
            <person name="Rajandream M.A."/>
            <person name="Sucgang R."/>
            <person name="Berriman M."/>
            <person name="Song J."/>
            <person name="Olsen R."/>
            <person name="Szafranski K."/>
            <person name="Xu Q."/>
            <person name="Tunggal B."/>
            <person name="Kummerfeld S."/>
            <person name="Madera M."/>
            <person name="Konfortov B.A."/>
            <person name="Rivero F."/>
            <person name="Bankier A.T."/>
            <person name="Lehmann R."/>
            <person name="Hamlin N."/>
            <person name="Davies R."/>
            <person name="Gaudet P."/>
            <person name="Fey P."/>
            <person name="Pilcher K."/>
            <person name="Chen G."/>
            <person name="Saunders D."/>
            <person name="Sodergren E.J."/>
            <person name="Davis P."/>
            <person name="Kerhornou A."/>
            <person name="Nie X."/>
            <person name="Hall N."/>
            <person name="Anjard C."/>
            <person name="Hemphill L."/>
            <person name="Bason N."/>
            <person name="Farbrother P."/>
            <person name="Desany B."/>
            <person name="Just E."/>
            <person name="Morio T."/>
            <person name="Rost R."/>
            <person name="Churcher C.M."/>
            <person name="Cooper J."/>
            <person name="Haydock S."/>
            <person name="van Driessche N."/>
            <person name="Cronin A."/>
            <person name="Goodhead I."/>
            <person name="Muzny D.M."/>
            <person name="Mourier T."/>
            <person name="Pain A."/>
            <person name="Lu M."/>
            <person name="Harper D."/>
            <person name="Lindsay R."/>
            <person name="Hauser H."/>
            <person name="James K.D."/>
            <person name="Quiles M."/>
            <person name="Madan Babu M."/>
            <person name="Saito T."/>
            <person name="Buchrieser C."/>
            <person name="Wardroper A."/>
            <person name="Felder M."/>
            <person name="Thangavelu M."/>
            <person name="Johnson D."/>
            <person name="Knights A."/>
            <person name="Loulseged H."/>
            <person name="Mungall K.L."/>
            <person name="Oliver K."/>
            <person name="Price C."/>
            <person name="Quail M.A."/>
            <person name="Urushihara H."/>
            <person name="Hernandez J."/>
            <person name="Rabbinowitsch E."/>
            <person name="Steffen D."/>
            <person name="Sanders M."/>
            <person name="Ma J."/>
            <person name="Kohara Y."/>
            <person name="Sharp S."/>
            <person name="Simmonds M.N."/>
            <person name="Spiegler S."/>
            <person name="Tivey A."/>
            <person name="Sugano S."/>
            <person name="White B."/>
            <person name="Walker D."/>
            <person name="Woodward J.R."/>
            <person name="Winckler T."/>
            <person name="Tanaka Y."/>
            <person name="Shaulsky G."/>
            <person name="Schleicher M."/>
            <person name="Weinstock G.M."/>
            <person name="Rosenthal A."/>
            <person name="Cox E.C."/>
            <person name="Chisholm R.L."/>
            <person name="Gibbs R.A."/>
            <person name="Loomis W.F."/>
            <person name="Platzer M."/>
            <person name="Kay R.R."/>
            <person name="Williams J.G."/>
            <person name="Dear P.H."/>
            <person name="Noegel A.A."/>
            <person name="Barrell B.G."/>
            <person name="Kuspa A."/>
        </authorList>
    </citation>
    <scope>NUCLEOTIDE SEQUENCE [LARGE SCALE GENOMIC DNA]</scope>
    <source>
        <strain>AX4</strain>
    </source>
</reference>
<reference key="2">
    <citation type="journal article" date="2008" name="BMC Microbiol.">
        <title>Dictyostelium transcriptional responses to Pseudomonas aeruginosa: common and specific effects from PAO1 and PA14 strains.</title>
        <authorList>
            <person name="Carilla-Latorre S."/>
            <person name="Calvo-Garrido J."/>
            <person name="Bloomfield G."/>
            <person name="Skelton J."/>
            <person name="Kay R.R."/>
            <person name="Ivens A."/>
            <person name="Martinez J.L."/>
            <person name="Escalante R."/>
        </authorList>
    </citation>
    <scope>INDUCTION [LARGE SCALE ANALYSIS]</scope>
</reference>
<name>DCD1A_DICDI</name>